<comment type="function">
    <text evidence="1">Sequence-specific transcription factor which is part of a developmental regulatory system that provides cells with specific positional identities on the anterior-posterior axis.</text>
</comment>
<comment type="subcellular location">
    <subcellularLocation>
        <location evidence="2">Nucleus</location>
    </subcellularLocation>
</comment>
<comment type="developmental stage">
    <text evidence="4">First detected at 11.5 hours post-fertilization (hpf) in dorsal presomitic mesoderm and in the neural keel, extending to the ventral somitic mesoderm during tail budding. At 16-19 hpf, the rostral expression boundary is at somite 10. By the end of somitogenesis, expression decreases in the lateral and ventral mesoderm and becomes restricted to the neural rod. Also expressed in the developing pectoral fins from 34 hpf, with progressive localization to the periphery.</text>
</comment>
<comment type="similarity">
    <text evidence="5">Belongs to the Abd-B homeobox family.</text>
</comment>
<name>HXABB_DANRE</name>
<organism>
    <name type="scientific">Danio rerio</name>
    <name type="common">Zebrafish</name>
    <name type="synonym">Brachydanio rerio</name>
    <dbReference type="NCBI Taxonomy" id="7955"/>
    <lineage>
        <taxon>Eukaryota</taxon>
        <taxon>Metazoa</taxon>
        <taxon>Chordata</taxon>
        <taxon>Craniata</taxon>
        <taxon>Vertebrata</taxon>
        <taxon>Euteleostomi</taxon>
        <taxon>Actinopterygii</taxon>
        <taxon>Neopterygii</taxon>
        <taxon>Teleostei</taxon>
        <taxon>Ostariophysi</taxon>
        <taxon>Cypriniformes</taxon>
        <taxon>Danionidae</taxon>
        <taxon>Danioninae</taxon>
        <taxon>Danio</taxon>
    </lineage>
</organism>
<evidence type="ECO:0000250" key="1"/>
<evidence type="ECO:0000255" key="2">
    <source>
        <dbReference type="PROSITE-ProRule" id="PRU00108"/>
    </source>
</evidence>
<evidence type="ECO:0000256" key="3">
    <source>
        <dbReference type="SAM" id="MobiDB-lite"/>
    </source>
</evidence>
<evidence type="ECO:0000269" key="4">
    <source>
    </source>
</evidence>
<evidence type="ECO:0000305" key="5"/>
<sequence length="283" mass="32315">MMDFDERVPVGSNMYLPGCTYYVSGTDFSSLPPFLPQTPSSCPMTYSYSTSSLPQVQSVREVSFRDYAIDTSSKWHSRGNLPHCYATEDMVHRECLSNPGTLGDMLSKNNSVLYHSNSSHTSNVYGSVGRNGVLPQAFDQFFETAYGNVENQPTEHPVDRATSKAPPPAESGSDSCRGTDETERCEETSSPEPSSGNNEDKFSGSSNGQKTRKKRCPYTKYQIRELEREFFFSVYINKEKRLQLSRMLNLTDRQVKIWFQNRRMKEKKLNRDRLQYYTTNPLL</sequence>
<gene>
    <name type="primary">hoxa11b</name>
    <name type="synonym">hoxa11</name>
</gene>
<proteinExistence type="evidence at transcript level"/>
<keyword id="KW-0217">Developmental protein</keyword>
<keyword id="KW-0238">DNA-binding</keyword>
<keyword id="KW-0371">Homeobox</keyword>
<keyword id="KW-0539">Nucleus</keyword>
<keyword id="KW-1185">Reference proteome</keyword>
<keyword id="KW-0804">Transcription</keyword>
<keyword id="KW-0805">Transcription regulation</keyword>
<accession>Q9DDU1</accession>
<accession>P79723</accession>
<accession>Q4PRA4</accession>
<dbReference type="EMBL" id="AF287137">
    <property type="protein sequence ID" value="AAG39068.1"/>
    <property type="molecule type" value="Genomic_DNA"/>
</dbReference>
<dbReference type="EMBL" id="DQ060539">
    <property type="protein sequence ID" value="AAY67917.1"/>
    <property type="molecule type" value="mRNA"/>
</dbReference>
<dbReference type="EMBL" id="Y07698">
    <property type="protein sequence ID" value="CAA68960.1"/>
    <property type="molecule type" value="Genomic_DNA"/>
</dbReference>
<dbReference type="RefSeq" id="NP_571222.1">
    <property type="nucleotide sequence ID" value="NM_131147.1"/>
</dbReference>
<dbReference type="SMR" id="Q9DDU1"/>
<dbReference type="FunCoup" id="Q9DDU1">
    <property type="interactions" value="68"/>
</dbReference>
<dbReference type="STRING" id="7955.ENSDARP00000005174"/>
<dbReference type="PaxDb" id="7955-ENSDARP00000005174"/>
<dbReference type="GeneID" id="30382"/>
<dbReference type="KEGG" id="dre:30382"/>
<dbReference type="AGR" id="ZFIN:ZDB-GENE-990415-4"/>
<dbReference type="CTD" id="30382"/>
<dbReference type="ZFIN" id="ZDB-GENE-990415-4">
    <property type="gene designation" value="hoxa11b"/>
</dbReference>
<dbReference type="eggNOG" id="KOG0487">
    <property type="taxonomic scope" value="Eukaryota"/>
</dbReference>
<dbReference type="InParanoid" id="Q9DDU1"/>
<dbReference type="OrthoDB" id="6159439at2759"/>
<dbReference type="PhylomeDB" id="Q9DDU1"/>
<dbReference type="PRO" id="PR:Q9DDU1"/>
<dbReference type="Proteomes" id="UP000000437">
    <property type="component" value="Chromosome 16"/>
</dbReference>
<dbReference type="GO" id="GO:0005654">
    <property type="term" value="C:nucleoplasm"/>
    <property type="evidence" value="ECO:0007669"/>
    <property type="project" value="UniProtKB-ARBA"/>
</dbReference>
<dbReference type="GO" id="GO:0005634">
    <property type="term" value="C:nucleus"/>
    <property type="evidence" value="ECO:0000318"/>
    <property type="project" value="GO_Central"/>
</dbReference>
<dbReference type="GO" id="GO:0000981">
    <property type="term" value="F:DNA-binding transcription factor activity, RNA polymerase II-specific"/>
    <property type="evidence" value="ECO:0000318"/>
    <property type="project" value="GO_Central"/>
</dbReference>
<dbReference type="GO" id="GO:0000978">
    <property type="term" value="F:RNA polymerase II cis-regulatory region sequence-specific DNA binding"/>
    <property type="evidence" value="ECO:0000318"/>
    <property type="project" value="GO_Central"/>
</dbReference>
<dbReference type="GO" id="GO:0060272">
    <property type="term" value="P:embryonic skeletal joint morphogenesis"/>
    <property type="evidence" value="ECO:0000318"/>
    <property type="project" value="GO_Central"/>
</dbReference>
<dbReference type="GO" id="GO:0006357">
    <property type="term" value="P:regulation of transcription by RNA polymerase II"/>
    <property type="evidence" value="ECO:0000318"/>
    <property type="project" value="GO_Central"/>
</dbReference>
<dbReference type="CDD" id="cd00086">
    <property type="entry name" value="homeodomain"/>
    <property type="match status" value="1"/>
</dbReference>
<dbReference type="FunFam" id="1.10.10.60:FF:000166">
    <property type="entry name" value="homeobox protein Hox-C11"/>
    <property type="match status" value="1"/>
</dbReference>
<dbReference type="Gene3D" id="1.10.10.60">
    <property type="entry name" value="Homeodomain-like"/>
    <property type="match status" value="1"/>
</dbReference>
<dbReference type="InterPro" id="IPR021918">
    <property type="entry name" value="DUF3528"/>
</dbReference>
<dbReference type="InterPro" id="IPR001356">
    <property type="entry name" value="HD"/>
</dbReference>
<dbReference type="InterPro" id="IPR020479">
    <property type="entry name" value="HD_metazoa"/>
</dbReference>
<dbReference type="InterPro" id="IPR017970">
    <property type="entry name" value="Homeobox_CS"/>
</dbReference>
<dbReference type="InterPro" id="IPR009057">
    <property type="entry name" value="Homeodomain-like_sf"/>
</dbReference>
<dbReference type="PANTHER" id="PTHR46092:SF3">
    <property type="entry name" value="HOMEOBOX PROTEIN HOX-A11"/>
    <property type="match status" value="1"/>
</dbReference>
<dbReference type="PANTHER" id="PTHR46092">
    <property type="entry name" value="HOMEOBOX PROTEIN HOX-A11-RELATED"/>
    <property type="match status" value="1"/>
</dbReference>
<dbReference type="Pfam" id="PF12045">
    <property type="entry name" value="DUF3528"/>
    <property type="match status" value="1"/>
</dbReference>
<dbReference type="Pfam" id="PF00046">
    <property type="entry name" value="Homeodomain"/>
    <property type="match status" value="1"/>
</dbReference>
<dbReference type="PRINTS" id="PR00024">
    <property type="entry name" value="HOMEOBOX"/>
</dbReference>
<dbReference type="SMART" id="SM00389">
    <property type="entry name" value="HOX"/>
    <property type="match status" value="1"/>
</dbReference>
<dbReference type="SUPFAM" id="SSF46689">
    <property type="entry name" value="Homeodomain-like"/>
    <property type="match status" value="1"/>
</dbReference>
<dbReference type="PROSITE" id="PS00027">
    <property type="entry name" value="HOMEOBOX_1"/>
    <property type="match status" value="1"/>
</dbReference>
<dbReference type="PROSITE" id="PS50071">
    <property type="entry name" value="HOMEOBOX_2"/>
    <property type="match status" value="1"/>
</dbReference>
<feature type="chain" id="PRO_0000200099" description="Homeobox protein Hox-A11b">
    <location>
        <begin position="1"/>
        <end position="283"/>
    </location>
</feature>
<feature type="DNA-binding region" description="Homeobox" evidence="2">
    <location>
        <begin position="211"/>
        <end position="270"/>
    </location>
</feature>
<feature type="region of interest" description="Disordered" evidence="3">
    <location>
        <begin position="150"/>
        <end position="215"/>
    </location>
</feature>
<feature type="compositionally biased region" description="Basic and acidic residues" evidence="3">
    <location>
        <begin position="177"/>
        <end position="187"/>
    </location>
</feature>
<feature type="compositionally biased region" description="Polar residues" evidence="3">
    <location>
        <begin position="188"/>
        <end position="209"/>
    </location>
</feature>
<feature type="sequence conflict" description="In Ref. 3." evidence="5" ref="3">
    <original>L</original>
    <variation>M</variation>
    <location>
        <position position="269"/>
    </location>
</feature>
<reference key="1">
    <citation type="journal article" date="2000" name="Mol. Phylogenet. Evol.">
        <title>Evolution of Hoxa-11 in lineages phylogenetically positioned along the fin-limb transition.</title>
        <authorList>
            <person name="Chiu C.-H."/>
            <person name="Nonaka D."/>
            <person name="Xue L."/>
            <person name="Amemiya C.T."/>
            <person name="Wagner G.P."/>
        </authorList>
    </citation>
    <scope>NUCLEOTIDE SEQUENCE [GENOMIC DNA]</scope>
</reference>
<reference key="2">
    <citation type="journal article" date="2005" name="Evol. Dev.">
        <title>Genomic annotation and transcriptome analysis of the zebrafish (Danio rerio) hox complex with description of a novel member, hoxb13a.</title>
        <authorList>
            <person name="Corredor-Adamez M."/>
            <person name="Welten M.C.M."/>
            <person name="Spaink H.P."/>
            <person name="Jeffery J.E."/>
            <person name="Schoon R.T."/>
            <person name="de Bakker M.A.G."/>
            <person name="Bagowski C.P."/>
            <person name="Meijer A.H."/>
            <person name="Verbeek F.J."/>
            <person name="Richardson M.K."/>
        </authorList>
    </citation>
    <scope>NUCLEOTIDE SEQUENCE [MRNA] OF 125-215</scope>
    <source>
        <strain>Tuebingen</strain>
    </source>
</reference>
<reference key="3">
    <citation type="journal article" date="1996" name="Mech. Dev.">
        <title>Zebrafish Hoxa and Evx-2 genes: cloning, developmental expression and implications for the functional evolution of posterior Hox genes.</title>
        <authorList>
            <person name="Sordino P."/>
            <person name="Duboule D."/>
            <person name="Kondo T."/>
        </authorList>
    </citation>
    <scope>NUCLEOTIDE SEQUENCE [GENOMIC DNA] OF 211-270</scope>
    <scope>DEVELOPMENTAL STAGE</scope>
</reference>
<protein>
    <recommendedName>
        <fullName>Homeobox protein Hox-A11b</fullName>
        <shortName>Hox-A11</shortName>
    </recommendedName>
</protein>